<accession>C0H447</accession>
<proteinExistence type="predicted"/>
<organism>
    <name type="scientific">Bacillus subtilis (strain 168)</name>
    <dbReference type="NCBI Taxonomy" id="224308"/>
    <lineage>
        <taxon>Bacteria</taxon>
        <taxon>Bacillati</taxon>
        <taxon>Bacillota</taxon>
        <taxon>Bacilli</taxon>
        <taxon>Bacillales</taxon>
        <taxon>Bacillaceae</taxon>
        <taxon>Bacillus</taxon>
    </lineage>
</organism>
<reference key="1">
    <citation type="journal article" date="1997" name="Nature">
        <title>The complete genome sequence of the Gram-positive bacterium Bacillus subtilis.</title>
        <authorList>
            <person name="Kunst F."/>
            <person name="Ogasawara N."/>
            <person name="Moszer I."/>
            <person name="Albertini A.M."/>
            <person name="Alloni G."/>
            <person name="Azevedo V."/>
            <person name="Bertero M.G."/>
            <person name="Bessieres P."/>
            <person name="Bolotin A."/>
            <person name="Borchert S."/>
            <person name="Borriss R."/>
            <person name="Boursier L."/>
            <person name="Brans A."/>
            <person name="Braun M."/>
            <person name="Brignell S.C."/>
            <person name="Bron S."/>
            <person name="Brouillet S."/>
            <person name="Bruschi C.V."/>
            <person name="Caldwell B."/>
            <person name="Capuano V."/>
            <person name="Carter N.M."/>
            <person name="Choi S.-K."/>
            <person name="Codani J.-J."/>
            <person name="Connerton I.F."/>
            <person name="Cummings N.J."/>
            <person name="Daniel R.A."/>
            <person name="Denizot F."/>
            <person name="Devine K.M."/>
            <person name="Duesterhoeft A."/>
            <person name="Ehrlich S.D."/>
            <person name="Emmerson P.T."/>
            <person name="Entian K.-D."/>
            <person name="Errington J."/>
            <person name="Fabret C."/>
            <person name="Ferrari E."/>
            <person name="Foulger D."/>
            <person name="Fritz C."/>
            <person name="Fujita M."/>
            <person name="Fujita Y."/>
            <person name="Fuma S."/>
            <person name="Galizzi A."/>
            <person name="Galleron N."/>
            <person name="Ghim S.-Y."/>
            <person name="Glaser P."/>
            <person name="Goffeau A."/>
            <person name="Golightly E.J."/>
            <person name="Grandi G."/>
            <person name="Guiseppi G."/>
            <person name="Guy B.J."/>
            <person name="Haga K."/>
            <person name="Haiech J."/>
            <person name="Harwood C.R."/>
            <person name="Henaut A."/>
            <person name="Hilbert H."/>
            <person name="Holsappel S."/>
            <person name="Hosono S."/>
            <person name="Hullo M.-F."/>
            <person name="Itaya M."/>
            <person name="Jones L.-M."/>
            <person name="Joris B."/>
            <person name="Karamata D."/>
            <person name="Kasahara Y."/>
            <person name="Klaerr-Blanchard M."/>
            <person name="Klein C."/>
            <person name="Kobayashi Y."/>
            <person name="Koetter P."/>
            <person name="Koningstein G."/>
            <person name="Krogh S."/>
            <person name="Kumano M."/>
            <person name="Kurita K."/>
            <person name="Lapidus A."/>
            <person name="Lardinois S."/>
            <person name="Lauber J."/>
            <person name="Lazarevic V."/>
            <person name="Lee S.-M."/>
            <person name="Levine A."/>
            <person name="Liu H."/>
            <person name="Masuda S."/>
            <person name="Mauel C."/>
            <person name="Medigue C."/>
            <person name="Medina N."/>
            <person name="Mellado R.P."/>
            <person name="Mizuno M."/>
            <person name="Moestl D."/>
            <person name="Nakai S."/>
            <person name="Noback M."/>
            <person name="Noone D."/>
            <person name="O'Reilly M."/>
            <person name="Ogawa K."/>
            <person name="Ogiwara A."/>
            <person name="Oudega B."/>
            <person name="Park S.-H."/>
            <person name="Parro V."/>
            <person name="Pohl T.M."/>
            <person name="Portetelle D."/>
            <person name="Porwollik S."/>
            <person name="Prescott A.M."/>
            <person name="Presecan E."/>
            <person name="Pujic P."/>
            <person name="Purnelle B."/>
            <person name="Rapoport G."/>
            <person name="Rey M."/>
            <person name="Reynolds S."/>
            <person name="Rieger M."/>
            <person name="Rivolta C."/>
            <person name="Rocha E."/>
            <person name="Roche B."/>
            <person name="Rose M."/>
            <person name="Sadaie Y."/>
            <person name="Sato T."/>
            <person name="Scanlan E."/>
            <person name="Schleich S."/>
            <person name="Schroeter R."/>
            <person name="Scoffone F."/>
            <person name="Sekiguchi J."/>
            <person name="Sekowska A."/>
            <person name="Seror S.J."/>
            <person name="Serror P."/>
            <person name="Shin B.-S."/>
            <person name="Soldo B."/>
            <person name="Sorokin A."/>
            <person name="Tacconi E."/>
            <person name="Takagi T."/>
            <person name="Takahashi H."/>
            <person name="Takemaru K."/>
            <person name="Takeuchi M."/>
            <person name="Tamakoshi A."/>
            <person name="Tanaka T."/>
            <person name="Terpstra P."/>
            <person name="Tognoni A."/>
            <person name="Tosato V."/>
            <person name="Uchiyama S."/>
            <person name="Vandenbol M."/>
            <person name="Vannier F."/>
            <person name="Vassarotti A."/>
            <person name="Viari A."/>
            <person name="Wambutt R."/>
            <person name="Wedler E."/>
            <person name="Wedler H."/>
            <person name="Weitzenegger T."/>
            <person name="Winters P."/>
            <person name="Wipat A."/>
            <person name="Yamamoto H."/>
            <person name="Yamane K."/>
            <person name="Yasumoto K."/>
            <person name="Yata K."/>
            <person name="Yoshida K."/>
            <person name="Yoshikawa H.-F."/>
            <person name="Zumstein E."/>
            <person name="Yoshikawa H."/>
            <person name="Danchin A."/>
        </authorList>
    </citation>
    <scope>NUCLEOTIDE SEQUENCE [LARGE SCALE GENOMIC DNA]</scope>
    <source>
        <strain>168</strain>
    </source>
</reference>
<reference key="2">
    <citation type="journal article" date="2009" name="Microbiology">
        <title>From a consortium sequence to a unified sequence: the Bacillus subtilis 168 reference genome a decade later.</title>
        <authorList>
            <person name="Barbe V."/>
            <person name="Cruveiller S."/>
            <person name="Kunst F."/>
            <person name="Lenoble P."/>
            <person name="Meurice G."/>
            <person name="Sekowska A."/>
            <person name="Vallenet D."/>
            <person name="Wang T."/>
            <person name="Moszer I."/>
            <person name="Medigue C."/>
            <person name="Danchin A."/>
        </authorList>
    </citation>
    <scope>IDENTIFICATION</scope>
</reference>
<gene>
    <name type="primary">ypzJ</name>
    <name type="ordered locus">BSU23328</name>
</gene>
<keyword id="KW-1185">Reference proteome</keyword>
<sequence length="68" mass="7407">MNNKGCIKCGSTEAGQKEIATTGTGLSKLFDVQHNRFLVVYCKNCGYSEFYNKESSTAGNILDLFFGG</sequence>
<dbReference type="EMBL" id="AL009126">
    <property type="protein sequence ID" value="CAX52656.1"/>
    <property type="molecule type" value="Genomic_DNA"/>
</dbReference>
<dbReference type="RefSeq" id="WP_003223929.1">
    <property type="nucleotide sequence ID" value="NZ_OZ025638.1"/>
</dbReference>
<dbReference type="RefSeq" id="YP_003097757.1">
    <property type="nucleotide sequence ID" value="NC_000964.3"/>
</dbReference>
<dbReference type="STRING" id="224308.BSU23328"/>
<dbReference type="PaxDb" id="224308-BSU23328"/>
<dbReference type="EnsemblBacteria" id="CAX52656">
    <property type="protein sequence ID" value="CAX52656"/>
    <property type="gene ID" value="BSU_23328"/>
</dbReference>
<dbReference type="GeneID" id="8302956"/>
<dbReference type="KEGG" id="bsu:BSU23328"/>
<dbReference type="PATRIC" id="fig|224308.179.peg.2538"/>
<dbReference type="eggNOG" id="COG3478">
    <property type="taxonomic scope" value="Bacteria"/>
</dbReference>
<dbReference type="InParanoid" id="C0H447"/>
<dbReference type="OrthoDB" id="6293663at2"/>
<dbReference type="PhylomeDB" id="C0H447"/>
<dbReference type="BioCyc" id="BSUB:BSU23328-MONOMER"/>
<dbReference type="PRO" id="PR:C0H447"/>
<dbReference type="Proteomes" id="UP000001570">
    <property type="component" value="Chromosome"/>
</dbReference>
<dbReference type="InterPro" id="IPR018652">
    <property type="entry name" value="DUF2082_NA-bd_Znr"/>
</dbReference>
<dbReference type="Pfam" id="PF09855">
    <property type="entry name" value="Zn_ribbon_13"/>
    <property type="match status" value="1"/>
</dbReference>
<feature type="chain" id="PRO_0000389488" description="Uncharacterized protein YpzJ">
    <location>
        <begin position="1"/>
        <end position="68"/>
    </location>
</feature>
<protein>
    <recommendedName>
        <fullName>Uncharacterized protein YpzJ</fullName>
    </recommendedName>
</protein>
<name>YPZJ_BACSU</name>